<keyword id="KW-0343">GTPase activation</keyword>
<keyword id="KW-0690">Ribosome biogenesis</keyword>
<sequence length="186" mass="21405">MARTKKTRRITDIMPMRKTDKRPENLSRPGKKLTRYELDAKSREEKKKKKRKGLTAGSRHSAVDTSKTIVLNEKKDPRVGSRKKVPLIVEFVNKPEKGMFIPSGALEEKAKTIDPMLELTQLENNESLNQLLDELDAGKTLSKKDQIFVNQCLDRIAQLMAELGIEEESEDDLYRTFETIDINQFK</sequence>
<protein>
    <recommendedName>
        <fullName evidence="1">Der GTPase-activating protein YihI</fullName>
    </recommendedName>
</protein>
<gene>
    <name evidence="1" type="primary">yihI</name>
    <name type="ordered locus">HS_0470</name>
</gene>
<name>YIHI_HISS1</name>
<comment type="function">
    <text evidence="1">A GTPase-activating protein (GAP) that modifies Der/EngA GTPase function. May play a role in ribosome biogenesis.</text>
</comment>
<comment type="subunit">
    <text evidence="1">Interacts with Der.</text>
</comment>
<comment type="similarity">
    <text evidence="1">Belongs to the YihI family.</text>
</comment>
<comment type="sequence caution" evidence="3">
    <conflict type="erroneous initiation">
        <sequence resource="EMBL-CDS" id="ABI24747"/>
    </conflict>
    <text>Extended N-terminus.</text>
</comment>
<accession>Q0I282</accession>
<evidence type="ECO:0000255" key="1">
    <source>
        <dbReference type="HAMAP-Rule" id="MF_01058"/>
    </source>
</evidence>
<evidence type="ECO:0000256" key="2">
    <source>
        <dbReference type="SAM" id="MobiDB-lite"/>
    </source>
</evidence>
<evidence type="ECO:0000305" key="3"/>
<proteinExistence type="inferred from homology"/>
<feature type="chain" id="PRO_0000402182" description="Der GTPase-activating protein YihI">
    <location>
        <begin position="1"/>
        <end position="186"/>
    </location>
</feature>
<feature type="region of interest" description="Disordered" evidence="2">
    <location>
        <begin position="1"/>
        <end position="65"/>
    </location>
</feature>
<feature type="compositionally biased region" description="Basic and acidic residues" evidence="2">
    <location>
        <begin position="9"/>
        <end position="25"/>
    </location>
</feature>
<feature type="compositionally biased region" description="Basic and acidic residues" evidence="2">
    <location>
        <begin position="34"/>
        <end position="45"/>
    </location>
</feature>
<organism>
    <name type="scientific">Histophilus somni (strain 129Pt)</name>
    <name type="common">Haemophilus somnus</name>
    <dbReference type="NCBI Taxonomy" id="205914"/>
    <lineage>
        <taxon>Bacteria</taxon>
        <taxon>Pseudomonadati</taxon>
        <taxon>Pseudomonadota</taxon>
        <taxon>Gammaproteobacteria</taxon>
        <taxon>Pasteurellales</taxon>
        <taxon>Pasteurellaceae</taxon>
        <taxon>Histophilus</taxon>
    </lineage>
</organism>
<reference key="1">
    <citation type="journal article" date="2007" name="J. Bacteriol.">
        <title>Complete genome sequence of Haemophilus somnus (Histophilus somni) strain 129Pt and comparison to Haemophilus ducreyi 35000HP and Haemophilus influenzae Rd.</title>
        <authorList>
            <person name="Challacombe J.F."/>
            <person name="Duncan A.J."/>
            <person name="Brettin T.S."/>
            <person name="Bruce D."/>
            <person name="Chertkov O."/>
            <person name="Detter J.C."/>
            <person name="Han C.S."/>
            <person name="Misra M."/>
            <person name="Richardson P."/>
            <person name="Tapia R."/>
            <person name="Thayer N."/>
            <person name="Xie G."/>
            <person name="Inzana T.J."/>
        </authorList>
    </citation>
    <scope>NUCLEOTIDE SEQUENCE [LARGE SCALE GENOMIC DNA]</scope>
    <source>
        <strain>129Pt</strain>
    </source>
</reference>
<dbReference type="EMBL" id="CP000436">
    <property type="protein sequence ID" value="ABI24747.1"/>
    <property type="status" value="ALT_INIT"/>
    <property type="molecule type" value="Genomic_DNA"/>
</dbReference>
<dbReference type="SMR" id="Q0I282"/>
<dbReference type="KEGG" id="hso:HS_0470"/>
<dbReference type="eggNOG" id="COG3078">
    <property type="taxonomic scope" value="Bacteria"/>
</dbReference>
<dbReference type="HOGENOM" id="CLU_094104_2_0_6"/>
<dbReference type="GO" id="GO:0005096">
    <property type="term" value="F:GTPase activator activity"/>
    <property type="evidence" value="ECO:0007669"/>
    <property type="project" value="UniProtKB-KW"/>
</dbReference>
<dbReference type="GO" id="GO:0042254">
    <property type="term" value="P:ribosome biogenesis"/>
    <property type="evidence" value="ECO:0007669"/>
    <property type="project" value="UniProtKB-KW"/>
</dbReference>
<dbReference type="HAMAP" id="MF_01058">
    <property type="entry name" value="GAP_YihI"/>
    <property type="match status" value="1"/>
</dbReference>
<dbReference type="InterPro" id="IPR007336">
    <property type="entry name" value="YihI"/>
</dbReference>
<dbReference type="NCBIfam" id="NF003560">
    <property type="entry name" value="PRK05244.1-1"/>
    <property type="match status" value="1"/>
</dbReference>
<dbReference type="Pfam" id="PF04220">
    <property type="entry name" value="YihI"/>
    <property type="match status" value="1"/>
</dbReference>